<organism>
    <name type="scientific">Bacillus anthracis (strain CDC 684 / NRRL 3495)</name>
    <dbReference type="NCBI Taxonomy" id="568206"/>
    <lineage>
        <taxon>Bacteria</taxon>
        <taxon>Bacillati</taxon>
        <taxon>Bacillota</taxon>
        <taxon>Bacilli</taxon>
        <taxon>Bacillales</taxon>
        <taxon>Bacillaceae</taxon>
        <taxon>Bacillus</taxon>
        <taxon>Bacillus cereus group</taxon>
    </lineage>
</organism>
<sequence>MLHRYLPMTEEDKKEMLQTIGVQTIDELFSDIPESVRFKGDLKIKEAKSEPELLKELSQMASKNANLKEYASFLGAGVYDHYAPVIVDHVISRSEFYTAYTPYQPEISQGELQAIFEFQTMICELTGMDVANSSMYDGGTALAEAAMLAAGHTRKKKILVSSAVHPESRAVLETYAKGQHLEVVEINHKDGVTDLDVLQSEVDDTVACVIVQYPNFFGQVEKLADIEKIVHQQKSLFIVSSNPLSLGALTPPGKFGADIVIGDAQPFGIPTQFGGPHCGYFATTKAFMRKIPGRLVGQTVDSDGKRGFVLTLQAREQHIRRDKATSNICSNQALNALAASVAMTALGKQGVKEMARQNISKAQYAKRQFEAKGFTVTFAGPFFNEFVVDCKRPVKEVNDALLQKNIIGGYDLGRDYKEHENHMLVAVTELRTKEEIDTLVNEMGAIQ</sequence>
<accession>C3LKQ3</accession>
<name>GCSPA_BACAC</name>
<reference key="1">
    <citation type="submission" date="2008-10" db="EMBL/GenBank/DDBJ databases">
        <title>Genome sequence of Bacillus anthracis str. CDC 684.</title>
        <authorList>
            <person name="Dodson R.J."/>
            <person name="Munk A.C."/>
            <person name="Brettin T."/>
            <person name="Bruce D."/>
            <person name="Detter C."/>
            <person name="Tapia R."/>
            <person name="Han C."/>
            <person name="Sutton G."/>
            <person name="Sims D."/>
        </authorList>
    </citation>
    <scope>NUCLEOTIDE SEQUENCE [LARGE SCALE GENOMIC DNA]</scope>
    <source>
        <strain>CDC 684 / NRRL 3495</strain>
    </source>
</reference>
<proteinExistence type="inferred from homology"/>
<comment type="function">
    <text evidence="1">The glycine cleavage system catalyzes the degradation of glycine. The P protein binds the alpha-amino group of glycine through its pyridoxal phosphate cofactor; CO(2) is released and the remaining methylamine moiety is then transferred to the lipoamide cofactor of the H protein.</text>
</comment>
<comment type="catalytic activity">
    <reaction evidence="1">
        <text>N(6)-[(R)-lipoyl]-L-lysyl-[glycine-cleavage complex H protein] + glycine + H(+) = N(6)-[(R)-S(8)-aminomethyldihydrolipoyl]-L-lysyl-[glycine-cleavage complex H protein] + CO2</text>
        <dbReference type="Rhea" id="RHEA:24304"/>
        <dbReference type="Rhea" id="RHEA-COMP:10494"/>
        <dbReference type="Rhea" id="RHEA-COMP:10495"/>
        <dbReference type="ChEBI" id="CHEBI:15378"/>
        <dbReference type="ChEBI" id="CHEBI:16526"/>
        <dbReference type="ChEBI" id="CHEBI:57305"/>
        <dbReference type="ChEBI" id="CHEBI:83099"/>
        <dbReference type="ChEBI" id="CHEBI:83143"/>
        <dbReference type="EC" id="1.4.4.2"/>
    </reaction>
</comment>
<comment type="subunit">
    <text evidence="1">The glycine cleavage system is composed of four proteins: P, T, L and H. In this organism, the P 'protein' is a heterodimer of two subunits.</text>
</comment>
<comment type="similarity">
    <text evidence="1">Belongs to the GcvP family. N-terminal subunit subfamily.</text>
</comment>
<gene>
    <name evidence="1" type="primary">gcvPA</name>
    <name type="ordered locus">BAMEG_4483</name>
</gene>
<protein>
    <recommendedName>
        <fullName evidence="1">Probable glycine dehydrogenase (decarboxylating) subunit 1</fullName>
        <ecNumber evidence="1">1.4.4.2</ecNumber>
    </recommendedName>
    <alternativeName>
        <fullName evidence="1">Glycine cleavage system P-protein subunit 1</fullName>
    </alternativeName>
    <alternativeName>
        <fullName evidence="1">Glycine decarboxylase subunit 1</fullName>
    </alternativeName>
    <alternativeName>
        <fullName evidence="1">Glycine dehydrogenase (aminomethyl-transferring) subunit 1</fullName>
    </alternativeName>
</protein>
<dbReference type="EC" id="1.4.4.2" evidence="1"/>
<dbReference type="EMBL" id="CP001215">
    <property type="protein sequence ID" value="ACP14616.1"/>
    <property type="molecule type" value="Genomic_DNA"/>
</dbReference>
<dbReference type="RefSeq" id="WP_000903231.1">
    <property type="nucleotide sequence ID" value="NC_012581.1"/>
</dbReference>
<dbReference type="SMR" id="C3LKQ3"/>
<dbReference type="GeneID" id="93006874"/>
<dbReference type="KEGG" id="bah:BAMEG_4483"/>
<dbReference type="HOGENOM" id="CLU_004620_0_2_9"/>
<dbReference type="GO" id="GO:0004375">
    <property type="term" value="F:glycine dehydrogenase (decarboxylating) activity"/>
    <property type="evidence" value="ECO:0007669"/>
    <property type="project" value="UniProtKB-EC"/>
</dbReference>
<dbReference type="GO" id="GO:0019464">
    <property type="term" value="P:glycine decarboxylation via glycine cleavage system"/>
    <property type="evidence" value="ECO:0007669"/>
    <property type="project" value="UniProtKB-UniRule"/>
</dbReference>
<dbReference type="GO" id="GO:0009116">
    <property type="term" value="P:nucleoside metabolic process"/>
    <property type="evidence" value="ECO:0007669"/>
    <property type="project" value="InterPro"/>
</dbReference>
<dbReference type="CDD" id="cd00613">
    <property type="entry name" value="GDC-P"/>
    <property type="match status" value="1"/>
</dbReference>
<dbReference type="FunFam" id="3.40.640.10:FF:000113">
    <property type="entry name" value="Probable glycine dehydrogenase (decarboxylating) subunit 1"/>
    <property type="match status" value="1"/>
</dbReference>
<dbReference type="Gene3D" id="3.90.1150.10">
    <property type="entry name" value="Aspartate Aminotransferase, domain 1"/>
    <property type="match status" value="1"/>
</dbReference>
<dbReference type="Gene3D" id="3.40.640.10">
    <property type="entry name" value="Type I PLP-dependent aspartate aminotransferase-like (Major domain)"/>
    <property type="match status" value="1"/>
</dbReference>
<dbReference type="HAMAP" id="MF_00712">
    <property type="entry name" value="GcvPA"/>
    <property type="match status" value="1"/>
</dbReference>
<dbReference type="InterPro" id="IPR023010">
    <property type="entry name" value="GcvPA"/>
</dbReference>
<dbReference type="InterPro" id="IPR049315">
    <property type="entry name" value="GDC-P_N"/>
</dbReference>
<dbReference type="InterPro" id="IPR020581">
    <property type="entry name" value="GDC_P"/>
</dbReference>
<dbReference type="InterPro" id="IPR015424">
    <property type="entry name" value="PyrdxlP-dep_Trfase"/>
</dbReference>
<dbReference type="InterPro" id="IPR015421">
    <property type="entry name" value="PyrdxlP-dep_Trfase_major"/>
</dbReference>
<dbReference type="InterPro" id="IPR015422">
    <property type="entry name" value="PyrdxlP-dep_Trfase_small"/>
</dbReference>
<dbReference type="NCBIfam" id="NF001696">
    <property type="entry name" value="PRK00451.1"/>
    <property type="match status" value="1"/>
</dbReference>
<dbReference type="PANTHER" id="PTHR42806">
    <property type="entry name" value="GLYCINE CLEAVAGE SYSTEM P-PROTEIN"/>
    <property type="match status" value="1"/>
</dbReference>
<dbReference type="PANTHER" id="PTHR42806:SF1">
    <property type="entry name" value="GLYCINE DEHYDROGENASE (DECARBOXYLATING)"/>
    <property type="match status" value="1"/>
</dbReference>
<dbReference type="Pfam" id="PF02347">
    <property type="entry name" value="GDC-P"/>
    <property type="match status" value="1"/>
</dbReference>
<dbReference type="PIRSF" id="PIRSF006815">
    <property type="entry name" value="GcvPA"/>
    <property type="match status" value="1"/>
</dbReference>
<dbReference type="SUPFAM" id="SSF53383">
    <property type="entry name" value="PLP-dependent transferases"/>
    <property type="match status" value="1"/>
</dbReference>
<feature type="chain" id="PRO_1000147976" description="Probable glycine dehydrogenase (decarboxylating) subunit 1">
    <location>
        <begin position="1"/>
        <end position="447"/>
    </location>
</feature>
<evidence type="ECO:0000255" key="1">
    <source>
        <dbReference type="HAMAP-Rule" id="MF_00712"/>
    </source>
</evidence>
<keyword id="KW-0560">Oxidoreductase</keyword>